<geneLocation type="plasmid">
    <name>megaplasmid Rsp</name>
</geneLocation>
<accession>P58599</accession>
<dbReference type="EC" id="3.2.1.4"/>
<dbReference type="EMBL" id="AL646053">
    <property type="protein sequence ID" value="CAD17313.1"/>
    <property type="status" value="ALT_INIT"/>
    <property type="molecule type" value="Genomic_DNA"/>
</dbReference>
<dbReference type="SMR" id="P58599"/>
<dbReference type="STRING" id="267608.RSp0162"/>
<dbReference type="CAZy" id="GH5">
    <property type="family name" value="Glycoside Hydrolase Family 5"/>
</dbReference>
<dbReference type="EnsemblBacteria" id="CAD17313">
    <property type="protein sequence ID" value="CAD17313"/>
    <property type="gene ID" value="RSp0162"/>
</dbReference>
<dbReference type="KEGG" id="rso:RSp0162"/>
<dbReference type="eggNOG" id="COG2730">
    <property type="taxonomic scope" value="Bacteria"/>
</dbReference>
<dbReference type="HOGENOM" id="CLU_029718_0_0_4"/>
<dbReference type="Proteomes" id="UP000001436">
    <property type="component" value="Plasmid megaplasmid Rsp"/>
</dbReference>
<dbReference type="GO" id="GO:0005886">
    <property type="term" value="C:plasma membrane"/>
    <property type="evidence" value="ECO:0007669"/>
    <property type="project" value="UniProtKB-SubCell"/>
</dbReference>
<dbReference type="GO" id="GO:0008810">
    <property type="term" value="F:cellulase activity"/>
    <property type="evidence" value="ECO:0007669"/>
    <property type="project" value="UniProtKB-EC"/>
</dbReference>
<dbReference type="GO" id="GO:0030245">
    <property type="term" value="P:cellulose catabolic process"/>
    <property type="evidence" value="ECO:0007669"/>
    <property type="project" value="UniProtKB-KW"/>
</dbReference>
<dbReference type="FunFam" id="3.20.20.80:FF:000124">
    <property type="entry name" value="Exported cellulase"/>
    <property type="match status" value="1"/>
</dbReference>
<dbReference type="Gene3D" id="3.20.20.80">
    <property type="entry name" value="Glycosidases"/>
    <property type="match status" value="1"/>
</dbReference>
<dbReference type="InterPro" id="IPR001547">
    <property type="entry name" value="Glyco_hydro_5"/>
</dbReference>
<dbReference type="InterPro" id="IPR018087">
    <property type="entry name" value="Glyco_hydro_5_CS"/>
</dbReference>
<dbReference type="InterPro" id="IPR017853">
    <property type="entry name" value="Glycoside_hydrolase_SF"/>
</dbReference>
<dbReference type="PANTHER" id="PTHR34142">
    <property type="entry name" value="ENDO-BETA-1,4-GLUCANASE A"/>
    <property type="match status" value="1"/>
</dbReference>
<dbReference type="PANTHER" id="PTHR34142:SF1">
    <property type="entry name" value="GLYCOSIDE HYDROLASE FAMILY 5 DOMAIN-CONTAINING PROTEIN"/>
    <property type="match status" value="1"/>
</dbReference>
<dbReference type="Pfam" id="PF00150">
    <property type="entry name" value="Cellulase"/>
    <property type="match status" value="1"/>
</dbReference>
<dbReference type="SUPFAM" id="SSF51445">
    <property type="entry name" value="(Trans)glycosidases"/>
    <property type="match status" value="1"/>
</dbReference>
<dbReference type="PROSITE" id="PS00659">
    <property type="entry name" value="GLYCOSYL_HYDROL_F5"/>
    <property type="match status" value="1"/>
</dbReference>
<dbReference type="PROSITE" id="PS51257">
    <property type="entry name" value="PROKAR_LIPOPROTEIN"/>
    <property type="match status" value="1"/>
</dbReference>
<feature type="signal peptide" evidence="2">
    <location>
        <begin position="1"/>
        <end position="19"/>
    </location>
</feature>
<feature type="propeptide" id="PRO_0000007867" evidence="1">
    <location>
        <begin position="20"/>
        <end position="43"/>
    </location>
</feature>
<feature type="chain" id="PRO_0000007868" description="Endoglucanase">
    <location>
        <begin position="44"/>
        <end position="424"/>
    </location>
</feature>
<feature type="active site" description="Proton donor" evidence="1">
    <location>
        <position position="247"/>
    </location>
</feature>
<feature type="active site" description="Nucleophile" evidence="1">
    <location>
        <position position="359"/>
    </location>
</feature>
<feature type="lipid moiety-binding region" description="N-palmitoyl cysteine" evidence="2">
    <location>
        <position position="20"/>
    </location>
</feature>
<feature type="lipid moiety-binding region" description="S-diacylglycerol cysteine" evidence="2">
    <location>
        <position position="20"/>
    </location>
</feature>
<protein>
    <recommendedName>
        <fullName>Endoglucanase</fullName>
        <ecNumber>3.2.1.4</ecNumber>
    </recommendedName>
    <alternativeName>
        <fullName>Cellulase</fullName>
    </alternativeName>
    <alternativeName>
        <fullName>Endo-1,4-beta-glucanase</fullName>
    </alternativeName>
</protein>
<evidence type="ECO:0000250" key="1"/>
<evidence type="ECO:0000255" key="2">
    <source>
        <dbReference type="PROSITE-ProRule" id="PRU00303"/>
    </source>
</evidence>
<evidence type="ECO:0000305" key="3"/>
<sequence>MHRCMPLVAASMAALMLAGCGGGDGDTTLSTAAATDTTTLKTAATTSISPLWLTIAKDSAAFTVSGTRTVRYGAGSAWVAKSMSGTGQCTAAFFGKDPAAGVAKVCQVAQGTGTLLWRGVSLAGAEFGEGSLPGTYGSNYIYPSADSATYYKNKGMNLVRLPFRWERLQPTLNQALDANELSRLTGFVNAVTAAGQTVLLDPHNYARYYGNVIGSSAVPNSAYADFWRRVATQFKGNARVIFGLMNEPNSMPTEQWLSGANAALAAIRSANASNVVFVPGNAWTGAHSWNQNWYGTPNGTVMKGINDPGRNLVFEVHQYLDGDSSGQSASCVSATIGAERLQDFTNWLRSNGYRGFLGEFGAASNDTCNQAVANMLTFVKNNADVWTGWAWWAGGPWWGGYMYSIEPSNGVDKPQMSVLAPYLK</sequence>
<gene>
    <name type="primary">egl</name>
    <name type="ordered locus">RSp0162</name>
    <name type="ORF">RS05516</name>
</gene>
<comment type="catalytic activity">
    <reaction>
        <text>Endohydrolysis of (1-&gt;4)-beta-D-glucosidic linkages in cellulose, lichenin and cereal beta-D-glucans.</text>
        <dbReference type="EC" id="3.2.1.4"/>
    </reaction>
</comment>
<comment type="subcellular location">
    <subcellularLocation>
        <location evidence="3">Cell membrane</location>
        <topology evidence="3">Lipid-anchor</topology>
    </subcellularLocation>
</comment>
<comment type="similarity">
    <text evidence="3">Belongs to the glycosyl hydrolase 5 (cellulase A) family.</text>
</comment>
<comment type="sequence caution" evidence="3">
    <conflict type="erroneous initiation">
        <sequence resource="EMBL-CDS" id="CAD17313"/>
    </conflict>
</comment>
<organism>
    <name type="scientific">Ralstonia nicotianae (strain ATCC BAA-1114 / GMI1000)</name>
    <name type="common">Ralstonia solanacearum</name>
    <dbReference type="NCBI Taxonomy" id="267608"/>
    <lineage>
        <taxon>Bacteria</taxon>
        <taxon>Pseudomonadati</taxon>
        <taxon>Pseudomonadota</taxon>
        <taxon>Betaproteobacteria</taxon>
        <taxon>Burkholderiales</taxon>
        <taxon>Burkholderiaceae</taxon>
        <taxon>Ralstonia</taxon>
        <taxon>Ralstonia solanacearum species complex</taxon>
    </lineage>
</organism>
<proteinExistence type="inferred from homology"/>
<reference key="1">
    <citation type="journal article" date="2002" name="Nature">
        <title>Genome sequence of the plant pathogen Ralstonia solanacearum.</title>
        <authorList>
            <person name="Salanoubat M."/>
            <person name="Genin S."/>
            <person name="Artiguenave F."/>
            <person name="Gouzy J."/>
            <person name="Mangenot S."/>
            <person name="Arlat M."/>
            <person name="Billault A."/>
            <person name="Brottier P."/>
            <person name="Camus J.-C."/>
            <person name="Cattolico L."/>
            <person name="Chandler M."/>
            <person name="Choisne N."/>
            <person name="Claudel-Renard C."/>
            <person name="Cunnac S."/>
            <person name="Demange N."/>
            <person name="Gaspin C."/>
            <person name="Lavie M."/>
            <person name="Moisan A."/>
            <person name="Robert C."/>
            <person name="Saurin W."/>
            <person name="Schiex T."/>
            <person name="Siguier P."/>
            <person name="Thebault P."/>
            <person name="Whalen M."/>
            <person name="Wincker P."/>
            <person name="Levy M."/>
            <person name="Weissenbach J."/>
            <person name="Boucher C.A."/>
        </authorList>
    </citation>
    <scope>NUCLEOTIDE SEQUENCE [LARGE SCALE GENOMIC DNA]</scope>
    <source>
        <strain>ATCC BAA-1114 / GMI1000</strain>
    </source>
</reference>
<keyword id="KW-0119">Carbohydrate metabolism</keyword>
<keyword id="KW-1003">Cell membrane</keyword>
<keyword id="KW-0136">Cellulose degradation</keyword>
<keyword id="KW-0326">Glycosidase</keyword>
<keyword id="KW-0378">Hydrolase</keyword>
<keyword id="KW-0449">Lipoprotein</keyword>
<keyword id="KW-0472">Membrane</keyword>
<keyword id="KW-0564">Palmitate</keyword>
<keyword id="KW-0614">Plasmid</keyword>
<keyword id="KW-0624">Polysaccharide degradation</keyword>
<keyword id="KW-1185">Reference proteome</keyword>
<keyword id="KW-0732">Signal</keyword>
<keyword id="KW-0865">Zymogen</keyword>
<name>GUN_RALN1</name>